<organism>
    <name type="scientific">Hypocrea jecorina (strain QM6a)</name>
    <name type="common">Trichoderma reesei</name>
    <dbReference type="NCBI Taxonomy" id="431241"/>
    <lineage>
        <taxon>Eukaryota</taxon>
        <taxon>Fungi</taxon>
        <taxon>Dikarya</taxon>
        <taxon>Ascomycota</taxon>
        <taxon>Pezizomycotina</taxon>
        <taxon>Sordariomycetes</taxon>
        <taxon>Hypocreomycetidae</taxon>
        <taxon>Hypocreales</taxon>
        <taxon>Hypocreaceae</taxon>
        <taxon>Trichoderma</taxon>
    </lineage>
</organism>
<comment type="function">
    <text evidence="4">L-xylulose reductase involved in the catabolism of D-galactose through an oxidoreductive pathway. Catalyzes the NADPH-dependent reduction of L-xylo-3-hexulose. Is also active with D-ribulose and L-xylulose, and to a lesser extent with D-xylulose, D-fructose and L- and D-sorbose. In the reverse reaction, shows activity with D-sorbitol and D-mannitol, low activity with xylitol, but no activity with galactitol, ribitol, and L- and D-arabitol.</text>
</comment>
<comment type="catalytic activity">
    <reaction evidence="4">
        <text>D-sorbitol + NADP(+) = L-xylo-3-hexulose + NADPH + H(+)</text>
        <dbReference type="Rhea" id="RHEA:51552"/>
        <dbReference type="ChEBI" id="CHEBI:15378"/>
        <dbReference type="ChEBI" id="CHEBI:17924"/>
        <dbReference type="ChEBI" id="CHEBI:57783"/>
        <dbReference type="ChEBI" id="CHEBI:58349"/>
        <dbReference type="ChEBI" id="CHEBI:134214"/>
    </reaction>
</comment>
<comment type="biophysicochemical properties">
    <kinetics>
        <KM evidence="4">2 mM for L-xylo-3-hexulose</KM>
        <KM evidence="4">47 mM for D-ribulose</KM>
        <KM evidence="4">22 mM for L-xylulose</KM>
        <Vmax evidence="4">5.5 umol/min/mg enzyme towards L-xylo-3-hexulose</Vmax>
        <Vmax evidence="4">14.0 umol/min/mg enzyme towards D-ribulose</Vmax>
        <Vmax evidence="4">4.2 umol/min/mg enzyme towards L-xylulose</Vmax>
    </kinetics>
</comment>
<comment type="pathway">
    <text evidence="6">Carbohydrate degradation.</text>
</comment>
<comment type="disruption phenotype">
    <text evidence="4">Decreases growth on D-galactose and impairs growth on galactitol.</text>
</comment>
<comment type="similarity">
    <text evidence="6">Belongs to the short-chain dehydrogenases/reductases (SDR) family.</text>
</comment>
<protein>
    <recommendedName>
        <fullName evidence="5">L-xylo-3-hexulose reductase</fullName>
        <ecNumber evidence="4">1.1.1.-</ecNumber>
    </recommendedName>
</protein>
<reference key="1">
    <citation type="journal article" date="2008" name="Nat. Biotechnol.">
        <title>Genome sequencing and analysis of the biomass-degrading fungus Trichoderma reesei (syn. Hypocrea jecorina).</title>
        <authorList>
            <person name="Martinez D."/>
            <person name="Berka R.M."/>
            <person name="Henrissat B."/>
            <person name="Saloheimo M."/>
            <person name="Arvas M."/>
            <person name="Baker S.E."/>
            <person name="Chapman J."/>
            <person name="Chertkov O."/>
            <person name="Coutinho P.M."/>
            <person name="Cullen D."/>
            <person name="Danchin E.G."/>
            <person name="Grigoriev I.V."/>
            <person name="Harris P."/>
            <person name="Jackson M."/>
            <person name="Kubicek C.P."/>
            <person name="Han C.S."/>
            <person name="Ho I."/>
            <person name="Larrondo L.F."/>
            <person name="de Leon A.L."/>
            <person name="Magnuson J.K."/>
            <person name="Merino S."/>
            <person name="Misra M."/>
            <person name="Nelson B."/>
            <person name="Putnam N."/>
            <person name="Robbertse B."/>
            <person name="Salamov A.A."/>
            <person name="Schmoll M."/>
            <person name="Terry A."/>
            <person name="Thayer N."/>
            <person name="Westerholm-Parvinen A."/>
            <person name="Schoch C.L."/>
            <person name="Yao J."/>
            <person name="Barabote R."/>
            <person name="Nelson M.A."/>
            <person name="Detter C."/>
            <person name="Bruce D."/>
            <person name="Kuske C.R."/>
            <person name="Xie G."/>
            <person name="Richardson P."/>
            <person name="Rokhsar D.S."/>
            <person name="Lucas S.M."/>
            <person name="Rubin E.M."/>
            <person name="Dunn-Coleman N."/>
            <person name="Ward M."/>
            <person name="Brettin T.S."/>
        </authorList>
    </citation>
    <scope>NUCLEOTIDE SEQUENCE [LARGE SCALE GENOMIC DNA]</scope>
    <source>
        <strain>QM6a</strain>
    </source>
</reference>
<reference key="2">
    <citation type="journal article" date="2012" name="J. Biol. Chem.">
        <title>L-xylo-3-hexulose reductase is the missing link in the oxidoreductive pathway for D-galactose catabolism in filamentous fungi.</title>
        <authorList>
            <person name="Mojzita D."/>
            <person name="Herold S."/>
            <person name="Metz B."/>
            <person name="Seiboth B."/>
            <person name="Richard P."/>
        </authorList>
    </citation>
    <scope>IDENTIFICATION</scope>
    <scope>INDUCTION</scope>
    <scope>DISRUPTION PHENOTYPE</scope>
    <scope>FUNCTION</scope>
    <scope>CATALYTIC ACTIVITY</scope>
    <scope>BIOPHYSICOCHEMICAL PROPERTIES</scope>
    <source>
        <strain>QM6a</strain>
    </source>
</reference>
<keyword id="KW-0119">Carbohydrate metabolism</keyword>
<keyword id="KW-0299">Galactose metabolism</keyword>
<keyword id="KW-0521">NADP</keyword>
<keyword id="KW-0560">Oxidoreductase</keyword>
<keyword id="KW-1185">Reference proteome</keyword>
<sequence>MARPYEGKLAIVTGASRGIGAAVARRLAAKGSNVLITFTSDSSRDLTRGLVEELSSKHGVHVQSVQTDLAKASTAAPIIVEAARTLFDSYSPPSGGKKFQVDILINNAGVSSNQFLNDPEKGAIDEAEFTRVYAINVLAPLLLTQAVAPHLPADRSGRIVNVSSVSASIGYLGQSVYAGSKGALEVMTRTWARELAERATVNSVNPGPAWGDMYAEAGPTFWRRNQPYVDAAPLMAYDGEEDVLRRAGGEADKFDRLVREQMGGRRPGFADEIAGTVDMLCTEESGWTTGSVVCANGGMRMSIA</sequence>
<accession>G0RNA2</accession>
<proteinExistence type="evidence at protein level"/>
<feature type="chain" id="PRO_0000433647" description="L-xylo-3-hexulose reductase">
    <location>
        <begin position="1"/>
        <end position="304"/>
    </location>
</feature>
<feature type="active site" description="Proton donor" evidence="2">
    <location>
        <position position="163"/>
    </location>
</feature>
<feature type="active site" description="Proton donor" evidence="2">
    <location>
        <position position="164"/>
    </location>
</feature>
<feature type="active site" description="Proton acceptor" evidence="3">
    <location>
        <position position="177"/>
    </location>
</feature>
<feature type="active site" description="Lowers pKa of active site Tyr" evidence="2">
    <location>
        <position position="181"/>
    </location>
</feature>
<feature type="binding site" evidence="1">
    <location>
        <position position="19"/>
    </location>
    <ligand>
        <name>NADP(+)</name>
        <dbReference type="ChEBI" id="CHEBI:58349"/>
    </ligand>
</feature>
<feature type="binding site" evidence="1">
    <location>
        <position position="68"/>
    </location>
    <ligand>
        <name>NADP(+)</name>
        <dbReference type="ChEBI" id="CHEBI:58349"/>
    </ligand>
</feature>
<feature type="binding site" evidence="2">
    <location>
        <position position="107"/>
    </location>
    <ligand>
        <name>NADP(+)</name>
        <dbReference type="ChEBI" id="CHEBI:58349"/>
    </ligand>
</feature>
<feature type="binding site" evidence="2">
    <location>
        <position position="177"/>
    </location>
    <ligand>
        <name>NADP(+)</name>
        <dbReference type="ChEBI" id="CHEBI:58349"/>
    </ligand>
</feature>
<feature type="binding site" evidence="2">
    <location>
        <position position="181"/>
    </location>
    <ligand>
        <name>NADP(+)</name>
        <dbReference type="ChEBI" id="CHEBI:58349"/>
    </ligand>
</feature>
<feature type="binding site" evidence="2">
    <location>
        <position position="209"/>
    </location>
    <ligand>
        <name>NADP(+)</name>
        <dbReference type="ChEBI" id="CHEBI:58349"/>
    </ligand>
</feature>
<gene>
    <name evidence="5" type="primary">lxr4</name>
    <name type="ORF">TRIREDRAFT_22771</name>
</gene>
<evidence type="ECO:0000250" key="1">
    <source>
        <dbReference type="UniProtKB" id="L0E2Z4"/>
    </source>
</evidence>
<evidence type="ECO:0000250" key="2">
    <source>
        <dbReference type="UniProtKB" id="O93868"/>
    </source>
</evidence>
<evidence type="ECO:0000255" key="3">
    <source>
        <dbReference type="PROSITE-ProRule" id="PRU10001"/>
    </source>
</evidence>
<evidence type="ECO:0000269" key="4">
    <source>
    </source>
</evidence>
<evidence type="ECO:0000303" key="5">
    <source>
    </source>
</evidence>
<evidence type="ECO:0000305" key="6"/>
<dbReference type="EC" id="1.1.1.-" evidence="4"/>
<dbReference type="EMBL" id="GL985069">
    <property type="protein sequence ID" value="EGR47347.1"/>
    <property type="molecule type" value="Genomic_DNA"/>
</dbReference>
<dbReference type="EMBL" id="BK008566">
    <property type="protein sequence ID" value="DAA35179.1"/>
    <property type="molecule type" value="Genomic_DNA"/>
</dbReference>
<dbReference type="RefSeq" id="XP_006966715.1">
    <property type="nucleotide sequence ID" value="XM_006966653.1"/>
</dbReference>
<dbReference type="SMR" id="G0RNA2"/>
<dbReference type="STRING" id="431241.G0RNA2"/>
<dbReference type="EnsemblFungi" id="EGR47347">
    <property type="protein sequence ID" value="EGR47347"/>
    <property type="gene ID" value="TRIREDRAFT_22771"/>
</dbReference>
<dbReference type="GeneID" id="18484185"/>
<dbReference type="KEGG" id="tre:TRIREDRAFT_22771"/>
<dbReference type="VEuPathDB" id="FungiDB:TRIREDRAFT_22771"/>
<dbReference type="eggNOG" id="KOG0725">
    <property type="taxonomic scope" value="Eukaryota"/>
</dbReference>
<dbReference type="HOGENOM" id="CLU_010194_1_3_1"/>
<dbReference type="OrthoDB" id="47007at2759"/>
<dbReference type="BioCyc" id="MetaCyc:MONOMER-18677"/>
<dbReference type="SABIO-RK" id="G0RNA2"/>
<dbReference type="Proteomes" id="UP000008984">
    <property type="component" value="Unassembled WGS sequence"/>
</dbReference>
<dbReference type="GO" id="GO:0016616">
    <property type="term" value="F:oxidoreductase activity, acting on the CH-OH group of donors, NAD or NADP as acceptor"/>
    <property type="evidence" value="ECO:0007669"/>
    <property type="project" value="TreeGrafter"/>
</dbReference>
<dbReference type="GO" id="GO:0048038">
    <property type="term" value="F:quinone binding"/>
    <property type="evidence" value="ECO:0007669"/>
    <property type="project" value="TreeGrafter"/>
</dbReference>
<dbReference type="GO" id="GO:0006633">
    <property type="term" value="P:fatty acid biosynthetic process"/>
    <property type="evidence" value="ECO:0007669"/>
    <property type="project" value="TreeGrafter"/>
</dbReference>
<dbReference type="GO" id="GO:0006012">
    <property type="term" value="P:galactose metabolic process"/>
    <property type="evidence" value="ECO:0007669"/>
    <property type="project" value="UniProtKB-KW"/>
</dbReference>
<dbReference type="CDD" id="cd05233">
    <property type="entry name" value="SDR_c"/>
    <property type="match status" value="1"/>
</dbReference>
<dbReference type="FunFam" id="3.40.50.720:FF:000374">
    <property type="entry name" value="3-oxoacyl-(Acyl-carrier-protein) reductase"/>
    <property type="match status" value="1"/>
</dbReference>
<dbReference type="Gene3D" id="3.40.50.720">
    <property type="entry name" value="NAD(P)-binding Rossmann-like Domain"/>
    <property type="match status" value="1"/>
</dbReference>
<dbReference type="InterPro" id="IPR036291">
    <property type="entry name" value="NAD(P)-bd_dom_sf"/>
</dbReference>
<dbReference type="InterPro" id="IPR020904">
    <property type="entry name" value="Sc_DH/Rdtase_CS"/>
</dbReference>
<dbReference type="InterPro" id="IPR002347">
    <property type="entry name" value="SDR_fam"/>
</dbReference>
<dbReference type="PANTHER" id="PTHR42760:SF111">
    <property type="entry name" value="3-OXOACYL-(ACYL-CARRIER-PROTEIN) REDUCTASE (AFU_ORTHOLOGUE AFUA_1G10100)"/>
    <property type="match status" value="1"/>
</dbReference>
<dbReference type="PANTHER" id="PTHR42760">
    <property type="entry name" value="SHORT-CHAIN DEHYDROGENASES/REDUCTASES FAMILY MEMBER"/>
    <property type="match status" value="1"/>
</dbReference>
<dbReference type="Pfam" id="PF00106">
    <property type="entry name" value="adh_short"/>
    <property type="match status" value="1"/>
</dbReference>
<dbReference type="PRINTS" id="PR00081">
    <property type="entry name" value="GDHRDH"/>
</dbReference>
<dbReference type="PRINTS" id="PR00080">
    <property type="entry name" value="SDRFAMILY"/>
</dbReference>
<dbReference type="SMART" id="SM00822">
    <property type="entry name" value="PKS_KR"/>
    <property type="match status" value="1"/>
</dbReference>
<dbReference type="SUPFAM" id="SSF51735">
    <property type="entry name" value="NAD(P)-binding Rossmann-fold domains"/>
    <property type="match status" value="1"/>
</dbReference>
<dbReference type="PROSITE" id="PS00061">
    <property type="entry name" value="ADH_SHORT"/>
    <property type="match status" value="1"/>
</dbReference>
<name>LXR4_HYPJQ</name>